<gene>
    <name type="primary">H3C2</name>
</gene>
<gene>
    <name type="primary">H3C3</name>
</gene>
<gene>
    <name type="primary">H3C4</name>
</gene>
<dbReference type="EMBL" id="M13378">
    <property type="protein sequence ID" value="AAA33472.1"/>
    <property type="molecule type" value="Genomic_DNA"/>
</dbReference>
<dbReference type="EMBL" id="M13379">
    <property type="protein sequence ID" value="AAA33473.1"/>
    <property type="molecule type" value="Genomic_DNA"/>
</dbReference>
<dbReference type="EMBL" id="M35388">
    <property type="protein sequence ID" value="AAA66265.1"/>
    <property type="molecule type" value="Genomic_DNA"/>
</dbReference>
<dbReference type="EMBL" id="M36658">
    <property type="protein sequence ID" value="AAA33471.1"/>
    <property type="molecule type" value="Genomic_DNA"/>
</dbReference>
<dbReference type="EMBL" id="X84377">
    <property type="protein sequence ID" value="CAA59111.1"/>
    <property type="molecule type" value="Genomic_DNA"/>
</dbReference>
<dbReference type="PIR" id="S57626">
    <property type="entry name" value="S57626"/>
</dbReference>
<dbReference type="RefSeq" id="NP_001131276.1">
    <property type="nucleotide sequence ID" value="NM_001137804.1"/>
</dbReference>
<dbReference type="RefSeq" id="XP_008663191.1">
    <property type="nucleotide sequence ID" value="XM_008664969.1"/>
</dbReference>
<dbReference type="RefSeq" id="XP_008669428.1">
    <property type="nucleotide sequence ID" value="XM_008671206.1"/>
</dbReference>
<dbReference type="PDB" id="7EF0">
    <property type="method" value="X-ray"/>
    <property type="resolution" value="1.50 A"/>
    <property type="chains" value="P=2-20"/>
</dbReference>
<dbReference type="PDB" id="7EF1">
    <property type="method" value="X-ray"/>
    <property type="resolution" value="1.90 A"/>
    <property type="chains" value="P/Q=2-11"/>
</dbReference>
<dbReference type="PDB" id="7EF2">
    <property type="method" value="X-ray"/>
    <property type="resolution" value="2.00 A"/>
    <property type="chains" value="P/Q=2-11"/>
</dbReference>
<dbReference type="PDB" id="7EF3">
    <property type="method" value="X-ray"/>
    <property type="resolution" value="2.10 A"/>
    <property type="chains" value="P/Q=2-11"/>
</dbReference>
<dbReference type="PDB" id="7UBU">
    <property type="method" value="X-ray"/>
    <property type="resolution" value="2.39 A"/>
    <property type="chains" value="P/Q=2-33"/>
</dbReference>
<dbReference type="PDBsum" id="7EF0"/>
<dbReference type="PDBsum" id="7EF1"/>
<dbReference type="PDBsum" id="7EF2"/>
<dbReference type="PDBsum" id="7EF3"/>
<dbReference type="PDBsum" id="7UBU"/>
<dbReference type="SMR" id="P69246"/>
<dbReference type="FunCoup" id="P69246">
    <property type="interactions" value="2062"/>
</dbReference>
<dbReference type="STRING" id="4577.P69246"/>
<dbReference type="iPTMnet" id="P69246"/>
<dbReference type="PaxDb" id="4577-GRMZM2G130079_P01"/>
<dbReference type="EnsemblPlants" id="Zm00001eb083310_T001">
    <property type="protein sequence ID" value="Zm00001eb083310_P001"/>
    <property type="gene ID" value="Zm00001eb083310"/>
</dbReference>
<dbReference type="EnsemblPlants" id="Zm00001eb083310_T002">
    <property type="protein sequence ID" value="Zm00001eb083310_P002"/>
    <property type="gene ID" value="Zm00001eb083310"/>
</dbReference>
<dbReference type="EnsemblPlants" id="Zm00001eb083380_T001">
    <property type="protein sequence ID" value="Zm00001eb083380_P001"/>
    <property type="gene ID" value="Zm00001eb083380"/>
</dbReference>
<dbReference type="EnsemblPlants" id="Zm00001eb123830_T001">
    <property type="protein sequence ID" value="Zm00001eb123830_P001"/>
    <property type="gene ID" value="Zm00001eb123830"/>
</dbReference>
<dbReference type="EnsemblPlants" id="Zm00001eb137500_T001">
    <property type="protein sequence ID" value="Zm00001eb137500_P001"/>
    <property type="gene ID" value="Zm00001eb137500"/>
</dbReference>
<dbReference type="EnsemblPlants" id="Zm00001eb181740_T001">
    <property type="protein sequence ID" value="Zm00001eb181740_P001"/>
    <property type="gene ID" value="Zm00001eb181740"/>
</dbReference>
<dbReference type="EnsemblPlants" id="Zm00001eb271240_T001">
    <property type="protein sequence ID" value="Zm00001eb271240_P001"/>
    <property type="gene ID" value="Zm00001eb271240"/>
</dbReference>
<dbReference type="EnsemblPlants" id="Zm00001eb376150_T001">
    <property type="protein sequence ID" value="Zm00001eb376150_P001"/>
    <property type="gene ID" value="Zm00001eb376150"/>
</dbReference>
<dbReference type="EnsemblPlants" id="Zm00001eb422190_T001">
    <property type="protein sequence ID" value="Zm00001eb422190_P001"/>
    <property type="gene ID" value="Zm00001eb422190"/>
</dbReference>
<dbReference type="EnsemblPlants" id="Zm00001eb422440_T001">
    <property type="protein sequence ID" value="Zm00001eb422440_P001"/>
    <property type="gene ID" value="Zm00001eb422440"/>
</dbReference>
<dbReference type="GeneID" id="100192589"/>
<dbReference type="Gramene" id="Zm00001eb083310_T001">
    <property type="protein sequence ID" value="Zm00001eb083310_P001"/>
    <property type="gene ID" value="Zm00001eb083310"/>
</dbReference>
<dbReference type="Gramene" id="Zm00001eb083310_T002">
    <property type="protein sequence ID" value="Zm00001eb083310_P002"/>
    <property type="gene ID" value="Zm00001eb083310"/>
</dbReference>
<dbReference type="Gramene" id="Zm00001eb083380_T001">
    <property type="protein sequence ID" value="Zm00001eb083380_P001"/>
    <property type="gene ID" value="Zm00001eb083380"/>
</dbReference>
<dbReference type="Gramene" id="Zm00001eb123830_T001">
    <property type="protein sequence ID" value="Zm00001eb123830_P001"/>
    <property type="gene ID" value="Zm00001eb123830"/>
</dbReference>
<dbReference type="Gramene" id="Zm00001eb137500_T001">
    <property type="protein sequence ID" value="Zm00001eb137500_P001"/>
    <property type="gene ID" value="Zm00001eb137500"/>
</dbReference>
<dbReference type="Gramene" id="Zm00001eb181740_T001">
    <property type="protein sequence ID" value="Zm00001eb181740_P001"/>
    <property type="gene ID" value="Zm00001eb181740"/>
</dbReference>
<dbReference type="Gramene" id="Zm00001eb271240_T001">
    <property type="protein sequence ID" value="Zm00001eb271240_P001"/>
    <property type="gene ID" value="Zm00001eb271240"/>
</dbReference>
<dbReference type="Gramene" id="Zm00001eb376150_T001">
    <property type="protein sequence ID" value="Zm00001eb376150_P001"/>
    <property type="gene ID" value="Zm00001eb376150"/>
</dbReference>
<dbReference type="Gramene" id="Zm00001eb422190_T001">
    <property type="protein sequence ID" value="Zm00001eb422190_P001"/>
    <property type="gene ID" value="Zm00001eb422190"/>
</dbReference>
<dbReference type="Gramene" id="Zm00001eb422440_T001">
    <property type="protein sequence ID" value="Zm00001eb422440_P001"/>
    <property type="gene ID" value="Zm00001eb422440"/>
</dbReference>
<dbReference type="KEGG" id="zma:100192589"/>
<dbReference type="KEGG" id="zma:103638044"/>
<dbReference type="KEGG" id="zma:103641629"/>
<dbReference type="KEGG" id="zma:103646477"/>
<dbReference type="KEGG" id="zma:103653610"/>
<dbReference type="MaizeGDB" id="25143"/>
<dbReference type="eggNOG" id="KOG1745">
    <property type="taxonomic scope" value="Eukaryota"/>
</dbReference>
<dbReference type="HOGENOM" id="CLU_078295_4_0_1"/>
<dbReference type="InParanoid" id="P69246"/>
<dbReference type="OMA" id="FLPMART"/>
<dbReference type="Proteomes" id="UP000007305">
    <property type="component" value="Chromosome 10"/>
</dbReference>
<dbReference type="Proteomes" id="UP000007305">
    <property type="component" value="Chromosome 2"/>
</dbReference>
<dbReference type="Proteomes" id="UP000007305">
    <property type="component" value="Chromosome 3"/>
</dbReference>
<dbReference type="Proteomes" id="UP000007305">
    <property type="component" value="Chromosome 4"/>
</dbReference>
<dbReference type="Proteomes" id="UP000007305">
    <property type="component" value="Chromosome 6"/>
</dbReference>
<dbReference type="Proteomes" id="UP000007305">
    <property type="component" value="Chromosome 9"/>
</dbReference>
<dbReference type="ExpressionAtlas" id="P69246">
    <property type="expression patterns" value="baseline and differential"/>
</dbReference>
<dbReference type="GO" id="GO:0010369">
    <property type="term" value="C:chromocenter"/>
    <property type="evidence" value="ECO:0007669"/>
    <property type="project" value="EnsemblPlants"/>
</dbReference>
<dbReference type="GO" id="GO:0000786">
    <property type="term" value="C:nucleosome"/>
    <property type="evidence" value="ECO:0007669"/>
    <property type="project" value="UniProtKB-KW"/>
</dbReference>
<dbReference type="GO" id="GO:0005634">
    <property type="term" value="C:nucleus"/>
    <property type="evidence" value="ECO:0007669"/>
    <property type="project" value="UniProtKB-SubCell"/>
</dbReference>
<dbReference type="GO" id="GO:0003677">
    <property type="term" value="F:DNA binding"/>
    <property type="evidence" value="ECO:0007669"/>
    <property type="project" value="UniProtKB-KW"/>
</dbReference>
<dbReference type="GO" id="GO:0046982">
    <property type="term" value="F:protein heterodimerization activity"/>
    <property type="evidence" value="ECO:0007669"/>
    <property type="project" value="InterPro"/>
</dbReference>
<dbReference type="GO" id="GO:0030527">
    <property type="term" value="F:structural constituent of chromatin"/>
    <property type="evidence" value="ECO:0007669"/>
    <property type="project" value="InterPro"/>
</dbReference>
<dbReference type="CDD" id="cd22911">
    <property type="entry name" value="HFD_H3"/>
    <property type="match status" value="1"/>
</dbReference>
<dbReference type="FunFam" id="1.10.20.10:FF:000078">
    <property type="entry name" value="Histone H3"/>
    <property type="match status" value="1"/>
</dbReference>
<dbReference type="FunFam" id="1.10.20.10:FF:000044">
    <property type="entry name" value="Histone H3.3"/>
    <property type="match status" value="1"/>
</dbReference>
<dbReference type="Gene3D" id="1.10.20.10">
    <property type="entry name" value="Histone, subunit A"/>
    <property type="match status" value="1"/>
</dbReference>
<dbReference type="InterPro" id="IPR009072">
    <property type="entry name" value="Histone-fold"/>
</dbReference>
<dbReference type="InterPro" id="IPR007125">
    <property type="entry name" value="Histone_H2A/H2B/H3"/>
</dbReference>
<dbReference type="InterPro" id="IPR000164">
    <property type="entry name" value="Histone_H3/CENP-A"/>
</dbReference>
<dbReference type="PANTHER" id="PTHR11426">
    <property type="entry name" value="HISTONE H3"/>
    <property type="match status" value="1"/>
</dbReference>
<dbReference type="Pfam" id="PF00125">
    <property type="entry name" value="Histone"/>
    <property type="match status" value="1"/>
</dbReference>
<dbReference type="PRINTS" id="PR00622">
    <property type="entry name" value="HISTONEH3"/>
</dbReference>
<dbReference type="SMART" id="SM00428">
    <property type="entry name" value="H3"/>
    <property type="match status" value="1"/>
</dbReference>
<dbReference type="SUPFAM" id="SSF47113">
    <property type="entry name" value="Histone-fold"/>
    <property type="match status" value="1"/>
</dbReference>
<dbReference type="PROSITE" id="PS00322">
    <property type="entry name" value="HISTONE_H3_1"/>
    <property type="match status" value="1"/>
</dbReference>
<dbReference type="PROSITE" id="PS00959">
    <property type="entry name" value="HISTONE_H3_2"/>
    <property type="match status" value="1"/>
</dbReference>
<sequence length="136" mass="15268">MARTKQTARKSTGGKAPRKQLATKAARKSAPATGGVKKPHRFRPGTVALREIRKYQKSTELLIRKLPFQRLVREIAQDFKTDLRFQSSAVAALQEAAEAYLVGLFEDTNLCAIHAKRVTIMPKDIQLARRIRGERA</sequence>
<protein>
    <recommendedName>
        <fullName>Histone H3.2</fullName>
    </recommendedName>
</protein>
<name>H32_MAIZE</name>
<feature type="initiator methionine" description="Removed" evidence="1">
    <location>
        <position position="1"/>
    </location>
</feature>
<feature type="chain" id="PRO_0000221281" description="Histone H3.2">
    <location>
        <begin position="2"/>
        <end position="136"/>
    </location>
</feature>
<feature type="region of interest" description="Disordered" evidence="2">
    <location>
        <begin position="1"/>
        <end position="43"/>
    </location>
</feature>
<feature type="modified residue" description="N6,N6,N6-trimethyllysine; alternate" evidence="1">
    <location>
        <position position="5"/>
    </location>
</feature>
<feature type="modified residue" description="N6,N6-dimethyllysine; alternate" evidence="3">
    <location>
        <position position="5"/>
    </location>
</feature>
<feature type="modified residue" description="N6-methyllysine; alternate" evidence="1">
    <location>
        <position position="5"/>
    </location>
</feature>
<feature type="modified residue" description="N6,N6,N6-trimethyllysine; alternate" evidence="1">
    <location>
        <position position="10"/>
    </location>
</feature>
<feature type="modified residue" description="N6,N6-dimethyllysine; alternate" evidence="3">
    <location>
        <position position="10"/>
    </location>
</feature>
<feature type="modified residue" description="N6-acetyllysine; alternate" evidence="1">
    <location>
        <position position="10"/>
    </location>
</feature>
<feature type="modified residue" description="N6-methyllysine; alternate" evidence="1">
    <location>
        <position position="10"/>
    </location>
</feature>
<feature type="modified residue" description="Phosphoserine" evidence="1">
    <location>
        <position position="11"/>
    </location>
</feature>
<feature type="modified residue" description="Phosphothreonine" evidence="1">
    <location>
        <position position="12"/>
    </location>
</feature>
<feature type="modified residue" description="N6-acetyllysine" evidence="1">
    <location>
        <position position="15"/>
    </location>
</feature>
<feature type="modified residue" description="N6-acetyllysine; alternate" evidence="1">
    <location>
        <position position="19"/>
    </location>
</feature>
<feature type="modified residue" description="N6-methylated lysine; alternate" evidence="1">
    <location>
        <position position="19"/>
    </location>
</feature>
<feature type="modified residue" description="N6-acetyllysine; alternate" evidence="1">
    <location>
        <position position="24"/>
    </location>
</feature>
<feature type="modified residue" description="N6-methylated lysine; alternate" evidence="1">
    <location>
        <position position="24"/>
    </location>
</feature>
<feature type="modified residue" description="N6,N6,N6-trimethyllysine; alternate" evidence="3">
    <location>
        <position position="28"/>
    </location>
</feature>
<feature type="modified residue" description="N6,N6-dimethyllysine; alternate" evidence="3">
    <location>
        <position position="28"/>
    </location>
</feature>
<feature type="modified residue" description="N6-methyllysine; alternate" evidence="1">
    <location>
        <position position="28"/>
    </location>
</feature>
<feature type="modified residue" description="Phosphoserine" evidence="1">
    <location>
        <position position="29"/>
    </location>
</feature>
<feature type="modified residue" description="N6-methylated lysine" evidence="1">
    <location>
        <position position="37"/>
    </location>
</feature>
<keyword id="KW-0002">3D-structure</keyword>
<keyword id="KW-0007">Acetylation</keyword>
<keyword id="KW-0158">Chromosome</keyword>
<keyword id="KW-0238">DNA-binding</keyword>
<keyword id="KW-0488">Methylation</keyword>
<keyword id="KW-0544">Nucleosome core</keyword>
<keyword id="KW-0539">Nucleus</keyword>
<keyword id="KW-0597">Phosphoprotein</keyword>
<keyword id="KW-1185">Reference proteome</keyword>
<accession>P69246</accession>
<accession>P05203</accession>
<accession>P05329</accession>
<accession>P05330</accession>
<accession>Q53X03</accession>
<reference key="1">
    <citation type="journal article" date="1986" name="Plant Mol. Biol.">
        <title>Nucleotide sequences of two corn histone H3 genes. Genomic organization of the corn histone H3 and H4 genes.</title>
        <authorList>
            <person name="Chaubet N."/>
            <person name="Philipps G."/>
            <person name="Chaboute M.-E."/>
            <person name="Ehling M."/>
            <person name="Gigot C."/>
        </authorList>
    </citation>
    <scope>NUCLEOTIDE SEQUENCE [GENOMIC DNA]</scope>
</reference>
<reference key="2">
    <citation type="journal article" date="1987" name="Dev. Genet.">
        <title>Histone genes in higher plants: organization and expression.</title>
        <authorList>
            <person name="Chaubet N."/>
            <person name="Chaboute M.-E."/>
            <person name="Philipps G."/>
            <person name="Gigot C."/>
        </authorList>
    </citation>
    <scope>NUCLEOTIDE SEQUENCE [GENOMIC DNA]</scope>
</reference>
<reference key="3">
    <citation type="journal article" date="1987" name="Plant Physiol. Biochem.">
        <title>Nucleotide sequences of two histone H3 and H4 genes of corn. Further insight into the structure and organization of the histone genes in higher plants.</title>
        <authorList>
            <person name="Gigot C."/>
            <person name="Chaubet N."/>
            <person name="Chaboute M.-E."/>
            <person name="Ehling M."/>
            <person name="Philipps G."/>
        </authorList>
    </citation>
    <scope>NUCLEOTIDE SEQUENCE [GENOMIC DNA]</scope>
</reference>
<reference key="4">
    <citation type="online journal article" date="1996" name="Plant Gene Register">
        <title>Nucleotide sequence of a new histone H3 gene in Zea mays.</title>
        <authorList>
            <person name="Tacchini P."/>
            <person name="Walbot W."/>
        </authorList>
        <locator>PGR96-021</locator>
    </citation>
    <scope>NUCLEOTIDE SEQUENCE [GENOMIC DNA]</scope>
    <source>
        <strain>cv. B37N</strain>
    </source>
</reference>
<reference key="5">
    <citation type="journal article" date="2006" name="Genetics">
        <title>Partitioning of the maize epigenome by the number of methyl groups on histone H3 lysines 9 and 27.</title>
        <authorList>
            <person name="Shi J."/>
            <person name="Dawe R.K."/>
        </authorList>
    </citation>
    <scope>SUBCELLULAR LOCATION</scope>
    <scope>METHYLATION AT LYS-5; LYS-10 AND LYS-28</scope>
</reference>
<comment type="function">
    <text>Core component of nucleosome. Nucleosomes wrap and compact DNA into chromatin, limiting DNA accessibility to the cellular machineries which require DNA as a template. Histones thereby play a central role in transcription regulation, DNA repair, DNA replication and chromosomal stability. DNA accessibility is regulated via a complex set of post-translational modifications of histones, also called histone code, and nucleosome remodeling.</text>
</comment>
<comment type="subunit">
    <text>The nucleosome is a histone octamer containing two molecules each of H2A, H2B, H3 and H4 assembled in one H3-H4 heterotetramer and two H2A-H2B heterodimers. The octamer wraps approximately 147 bp of DNA.</text>
</comment>
<comment type="subcellular location">
    <subcellularLocation>
        <location evidence="3">Nucleus</location>
    </subcellularLocation>
    <subcellularLocation>
        <location evidence="3">Chromosome</location>
    </subcellularLocation>
</comment>
<comment type="PTM">
    <text evidence="1">Acetylation is generally linked to gene activation. Can be acetylated to form H3K9ac, H3K14ac, H3K18ac and H3K23ac. H3K9ac could compete with H3K9me and prevent gene silencing. H3K9ac is restricted to euchromatin (By similarity).</text>
</comment>
<comment type="PTM">
    <text evidence="3">Methylated to form mainly H3K4me, H3K9me, H3K18me, H3K23me, H3K27me and H3K36me. H3K9 and H3K27 are predominantly under the form of H3K9me1 and H3K27me1. H2BK143ub1 is probably prerequisite for H3K4me. H3K4me2, H3K9me2 and H3K9me3 are restricted to euchromatin, including centromeres. H3K27me2 is specifically enriched in heterochromatin, including chromomeres, pericentromeres and knobs. H3K27me3 is limited to several discrete euchromatic domains. H3K9me1 and H3K27me1 are enriched in pericentromeric heterochromatin, but also found in euchromatin between chromomeres.</text>
</comment>
<comment type="PTM">
    <text evidence="1">Can be phosphorylated to form H3S10ph, H3T11ph and H3S28ph.</text>
</comment>
<comment type="similarity">
    <text evidence="4">Belongs to the histone H3 family.</text>
</comment>
<comment type="caution">
    <text evidence="4">To ensure consistency between histone entries, we follow the 'Brno' nomenclature for histone modifications, with positions referring to those used in the literature for the 'closest' model organism. Due to slight variations in histone sequences between organisms and to the presence of initiator methionine in UniProtKB/Swiss-Prot sequences, the actual positions of modified amino acids in the sequence generally differ. In this entry the following conventions are used: H3K4me1/2/3 = mono-, di- and trimethylated Lys-5; H3K9ac = acetylated Lys-10; H3K9me1/2/3 = mono-, di- and trimethylated Lys-10; H3S10ph = phosphorylated Ser-11; H3T11ph = phosphorylated Thr-12; H3K14ac = acetylated Lys-15; H3K18ac = acetylated Lys-19; H3K18me = methylated Lys-19; H3K23ac = acetylated Lys-24; H3K23me = methylated Lys-24; H3K27me1/2/3 = mono-, di- and trimethylated Lys-28; H3S28ph = phosphorylated Ser-29; H3K36me = methylated Lys-37.</text>
</comment>
<organism>
    <name type="scientific">Zea mays</name>
    <name type="common">Maize</name>
    <dbReference type="NCBI Taxonomy" id="4577"/>
    <lineage>
        <taxon>Eukaryota</taxon>
        <taxon>Viridiplantae</taxon>
        <taxon>Streptophyta</taxon>
        <taxon>Embryophyta</taxon>
        <taxon>Tracheophyta</taxon>
        <taxon>Spermatophyta</taxon>
        <taxon>Magnoliopsida</taxon>
        <taxon>Liliopsida</taxon>
        <taxon>Poales</taxon>
        <taxon>Poaceae</taxon>
        <taxon>PACMAD clade</taxon>
        <taxon>Panicoideae</taxon>
        <taxon>Andropogonodae</taxon>
        <taxon>Andropogoneae</taxon>
        <taxon>Tripsacinae</taxon>
        <taxon>Zea</taxon>
    </lineage>
</organism>
<proteinExistence type="evidence at protein level"/>
<evidence type="ECO:0000250" key="1"/>
<evidence type="ECO:0000256" key="2">
    <source>
        <dbReference type="SAM" id="MobiDB-lite"/>
    </source>
</evidence>
<evidence type="ECO:0000269" key="3">
    <source>
    </source>
</evidence>
<evidence type="ECO:0000305" key="4"/>